<proteinExistence type="inferred from homology"/>
<comment type="function">
    <text evidence="1">Non-catalytic component of the exosome, which is a complex involved in RNA degradation. Increases the RNA binding and the efficiency of RNA degradation. Confers strong poly(A) specificity to the exosome.</text>
</comment>
<comment type="subunit">
    <text evidence="1">Component of the archaeal exosome complex. Forms a trimer of Rrp4 and/or Csl4 subunits. The trimer associates with a hexameric ring-like arrangement composed of 3 Rrp41-Rrp42 heterodimers.</text>
</comment>
<comment type="subcellular location">
    <subcellularLocation>
        <location evidence="1">Cytoplasm</location>
    </subcellularLocation>
</comment>
<comment type="similarity">
    <text evidence="1">Belongs to the RRP4 family.</text>
</comment>
<reference key="1">
    <citation type="journal article" date="2010" name="Proc. Natl. Acad. Sci. U.S.A.">
        <title>Nitrosopumilus maritimus genome reveals unique mechanisms for nitrification and autotrophy in globally distributed marine crenarchaea.</title>
        <authorList>
            <person name="Walker C.B."/>
            <person name="de la Torre J.R."/>
            <person name="Klotz M.G."/>
            <person name="Urakawa H."/>
            <person name="Pinel N."/>
            <person name="Arp D.J."/>
            <person name="Brochier-Armanet C."/>
            <person name="Chain P.S."/>
            <person name="Chan P.P."/>
            <person name="Gollabgir A."/>
            <person name="Hemp J."/>
            <person name="Hugler M."/>
            <person name="Karr E.A."/>
            <person name="Konneke M."/>
            <person name="Shin M."/>
            <person name="Lawton T.J."/>
            <person name="Lowe T."/>
            <person name="Martens-Habbena W."/>
            <person name="Sayavedra-Soto L.A."/>
            <person name="Lang D."/>
            <person name="Sievert S.M."/>
            <person name="Rosenzweig A.C."/>
            <person name="Manning G."/>
            <person name="Stahl D.A."/>
        </authorList>
    </citation>
    <scope>NUCLEOTIDE SEQUENCE [LARGE SCALE GENOMIC DNA]</scope>
    <source>
        <strain>SCM1</strain>
    </source>
</reference>
<feature type="chain" id="PRO_0000416234" description="Exosome complex component Rrp4">
    <location>
        <begin position="1"/>
        <end position="226"/>
    </location>
</feature>
<feature type="domain" description="S1 motif" evidence="1">
    <location>
        <begin position="61"/>
        <end position="135"/>
    </location>
</feature>
<feature type="domain" description="KH" evidence="1">
    <location>
        <begin position="141"/>
        <end position="200"/>
    </location>
</feature>
<dbReference type="EMBL" id="CP000866">
    <property type="protein sequence ID" value="ABX12327.1"/>
    <property type="molecule type" value="Genomic_DNA"/>
</dbReference>
<dbReference type="RefSeq" id="WP_012214814.1">
    <property type="nucleotide sequence ID" value="NC_010085.1"/>
</dbReference>
<dbReference type="SMR" id="A9A5C8"/>
<dbReference type="FunCoup" id="A9A5C8">
    <property type="interactions" value="140"/>
</dbReference>
<dbReference type="STRING" id="436308.Nmar_0431"/>
<dbReference type="EnsemblBacteria" id="ABX12327">
    <property type="protein sequence ID" value="ABX12327"/>
    <property type="gene ID" value="Nmar_0431"/>
</dbReference>
<dbReference type="GeneID" id="5773087"/>
<dbReference type="KEGG" id="nmr:Nmar_0431"/>
<dbReference type="eggNOG" id="arCOG00678">
    <property type="taxonomic scope" value="Archaea"/>
</dbReference>
<dbReference type="HOGENOM" id="CLU_071769_0_0_2"/>
<dbReference type="InParanoid" id="A9A5C8"/>
<dbReference type="OrthoDB" id="35160at2157"/>
<dbReference type="PhylomeDB" id="A9A5C8"/>
<dbReference type="Proteomes" id="UP000000792">
    <property type="component" value="Chromosome"/>
</dbReference>
<dbReference type="GO" id="GO:0005737">
    <property type="term" value="C:cytoplasm"/>
    <property type="evidence" value="ECO:0007669"/>
    <property type="project" value="UniProtKB-SubCell"/>
</dbReference>
<dbReference type="GO" id="GO:0000178">
    <property type="term" value="C:exosome (RNase complex)"/>
    <property type="evidence" value="ECO:0000318"/>
    <property type="project" value="GO_Central"/>
</dbReference>
<dbReference type="GO" id="GO:0008143">
    <property type="term" value="F:poly(A) binding"/>
    <property type="evidence" value="ECO:0007669"/>
    <property type="project" value="InterPro"/>
</dbReference>
<dbReference type="GO" id="GO:0003723">
    <property type="term" value="F:RNA binding"/>
    <property type="evidence" value="ECO:0000318"/>
    <property type="project" value="GO_Central"/>
</dbReference>
<dbReference type="GO" id="GO:0071034">
    <property type="term" value="P:CUT catabolic process"/>
    <property type="evidence" value="ECO:0000318"/>
    <property type="project" value="GO_Central"/>
</dbReference>
<dbReference type="GO" id="GO:0000467">
    <property type="term" value="P:exonucleolytic trimming to generate mature 3'-end of 5.8S rRNA from tricistronic rRNA transcript (SSU-rRNA, 5.8S rRNA, LSU-rRNA)"/>
    <property type="evidence" value="ECO:0000318"/>
    <property type="project" value="GO_Central"/>
</dbReference>
<dbReference type="GO" id="GO:0071051">
    <property type="term" value="P:poly(A)-dependent snoRNA 3'-end processing"/>
    <property type="evidence" value="ECO:0000318"/>
    <property type="project" value="GO_Central"/>
</dbReference>
<dbReference type="GO" id="GO:0006401">
    <property type="term" value="P:RNA catabolic process"/>
    <property type="evidence" value="ECO:0007669"/>
    <property type="project" value="UniProtKB-UniRule"/>
</dbReference>
<dbReference type="GO" id="GO:0034475">
    <property type="term" value="P:U4 snRNA 3'-end processing"/>
    <property type="evidence" value="ECO:0000318"/>
    <property type="project" value="GO_Central"/>
</dbReference>
<dbReference type="CDD" id="cd22524">
    <property type="entry name" value="KH-I_Rrp4_prokar"/>
    <property type="match status" value="1"/>
</dbReference>
<dbReference type="CDD" id="cd05789">
    <property type="entry name" value="S1_Rrp4"/>
    <property type="match status" value="1"/>
</dbReference>
<dbReference type="FunFam" id="2.40.50.140:FF:000127">
    <property type="entry name" value="Exosome complex component RRP40"/>
    <property type="match status" value="1"/>
</dbReference>
<dbReference type="Gene3D" id="2.40.50.100">
    <property type="match status" value="1"/>
</dbReference>
<dbReference type="Gene3D" id="3.30.1370.10">
    <property type="entry name" value="K Homology domain, type 1"/>
    <property type="match status" value="1"/>
</dbReference>
<dbReference type="Gene3D" id="2.40.50.140">
    <property type="entry name" value="Nucleic acid-binding proteins"/>
    <property type="match status" value="1"/>
</dbReference>
<dbReference type="HAMAP" id="MF_00623">
    <property type="entry name" value="Exosome_Rrp4"/>
    <property type="match status" value="1"/>
</dbReference>
<dbReference type="InterPro" id="IPR026699">
    <property type="entry name" value="Exosome_RNA_bind1/RRP40/RRP4"/>
</dbReference>
<dbReference type="InterPro" id="IPR004087">
    <property type="entry name" value="KH_dom"/>
</dbReference>
<dbReference type="InterPro" id="IPR004088">
    <property type="entry name" value="KH_dom_type_1"/>
</dbReference>
<dbReference type="InterPro" id="IPR036612">
    <property type="entry name" value="KH_dom_type_1_sf"/>
</dbReference>
<dbReference type="InterPro" id="IPR012340">
    <property type="entry name" value="NA-bd_OB-fold"/>
</dbReference>
<dbReference type="InterPro" id="IPR023474">
    <property type="entry name" value="Rrp4"/>
</dbReference>
<dbReference type="InterPro" id="IPR054371">
    <property type="entry name" value="RRP4_N"/>
</dbReference>
<dbReference type="InterPro" id="IPR048565">
    <property type="entry name" value="RRP4_S1"/>
</dbReference>
<dbReference type="InterPro" id="IPR003029">
    <property type="entry name" value="S1_domain"/>
</dbReference>
<dbReference type="NCBIfam" id="NF003181">
    <property type="entry name" value="PRK04163.1-1"/>
    <property type="match status" value="1"/>
</dbReference>
<dbReference type="PANTHER" id="PTHR21321:SF4">
    <property type="entry name" value="EXOSOME COMPLEX COMPONENT RRP4"/>
    <property type="match status" value="1"/>
</dbReference>
<dbReference type="PANTHER" id="PTHR21321">
    <property type="entry name" value="PNAS-3 RELATED"/>
    <property type="match status" value="1"/>
</dbReference>
<dbReference type="Pfam" id="PF22625">
    <property type="entry name" value="ECR1_N_2"/>
    <property type="match status" value="1"/>
</dbReference>
<dbReference type="Pfam" id="PF00013">
    <property type="entry name" value="KH_1"/>
    <property type="match status" value="1"/>
</dbReference>
<dbReference type="SMART" id="SM00322">
    <property type="entry name" value="KH"/>
    <property type="match status" value="1"/>
</dbReference>
<dbReference type="SMART" id="SM00316">
    <property type="entry name" value="S1"/>
    <property type="match status" value="1"/>
</dbReference>
<dbReference type="SUPFAM" id="SSF54791">
    <property type="entry name" value="Eukaryotic type KH-domain (KH-domain type I)"/>
    <property type="match status" value="1"/>
</dbReference>
<dbReference type="SUPFAM" id="SSF50249">
    <property type="entry name" value="Nucleic acid-binding proteins"/>
    <property type="match status" value="1"/>
</dbReference>
<dbReference type="SUPFAM" id="SSF110324">
    <property type="entry name" value="Ribosomal L27 protein-like"/>
    <property type="match status" value="1"/>
</dbReference>
<dbReference type="PROSITE" id="PS50084">
    <property type="entry name" value="KH_TYPE_1"/>
    <property type="match status" value="1"/>
</dbReference>
<dbReference type="PROSITE" id="PS50126">
    <property type="entry name" value="S1"/>
    <property type="match status" value="1"/>
</dbReference>
<organism>
    <name type="scientific">Nitrosopumilus maritimus (strain SCM1)</name>
    <dbReference type="NCBI Taxonomy" id="436308"/>
    <lineage>
        <taxon>Archaea</taxon>
        <taxon>Nitrososphaerota</taxon>
        <taxon>Nitrososphaeria</taxon>
        <taxon>Nitrosopumilales</taxon>
        <taxon>Nitrosopumilaceae</taxon>
        <taxon>Nitrosopumilus</taxon>
    </lineage>
</organism>
<name>RRP4_NITMS</name>
<evidence type="ECO:0000255" key="1">
    <source>
        <dbReference type="HAMAP-Rule" id="MF_00623"/>
    </source>
</evidence>
<gene>
    <name evidence="1" type="primary">rrp4</name>
    <name type="ordered locus">Nmar_0431</name>
</gene>
<sequence length="226" mass="24669">MADKRKYVIPGDVVTTGPFRPEQNTVLEGNKIISTTIGISEIYDDSVRVIPLTGKYIPKINDLVIGKVNSHTSLSWELDINSCYVGFLPAQDVFGRDFSAHADELATKLRTGDLVAARIANFDRTRDPLVSISDRDLGKIDSGVLMEISPSKVPRLIGKKGSMIQMIEEATDAAVTIGQNGWVVVSCESPEGLLKAKKAIQMVNEQAHVANLTDQVKEMLDKKGES</sequence>
<protein>
    <recommendedName>
        <fullName evidence="1">Exosome complex component Rrp4</fullName>
    </recommendedName>
</protein>
<accession>A9A5C8</accession>
<keyword id="KW-0963">Cytoplasm</keyword>
<keyword id="KW-0271">Exosome</keyword>
<keyword id="KW-1185">Reference proteome</keyword>
<keyword id="KW-0694">RNA-binding</keyword>